<dbReference type="EC" id="7.1.1.-" evidence="1"/>
<dbReference type="EMBL" id="CP000050">
    <property type="protein sequence ID" value="AAY48662.1"/>
    <property type="status" value="ALT_INIT"/>
    <property type="molecule type" value="Genomic_DNA"/>
</dbReference>
<dbReference type="RefSeq" id="WP_011037652.1">
    <property type="nucleotide sequence ID" value="NZ_CP155948.1"/>
</dbReference>
<dbReference type="SMR" id="Q4UWB1"/>
<dbReference type="KEGG" id="xcb:XC_1596"/>
<dbReference type="HOGENOM" id="CLU_015134_0_1_6"/>
<dbReference type="Proteomes" id="UP000000420">
    <property type="component" value="Chromosome"/>
</dbReference>
<dbReference type="GO" id="GO:0005886">
    <property type="term" value="C:plasma membrane"/>
    <property type="evidence" value="ECO:0007669"/>
    <property type="project" value="UniProtKB-SubCell"/>
</dbReference>
<dbReference type="GO" id="GO:0003954">
    <property type="term" value="F:NADH dehydrogenase activity"/>
    <property type="evidence" value="ECO:0007669"/>
    <property type="project" value="TreeGrafter"/>
</dbReference>
<dbReference type="GO" id="GO:0016655">
    <property type="term" value="F:oxidoreductase activity, acting on NAD(P)H, quinone or similar compound as acceptor"/>
    <property type="evidence" value="ECO:0007669"/>
    <property type="project" value="UniProtKB-UniRule"/>
</dbReference>
<dbReference type="GO" id="GO:0048038">
    <property type="term" value="F:quinone binding"/>
    <property type="evidence" value="ECO:0007669"/>
    <property type="project" value="UniProtKB-KW"/>
</dbReference>
<dbReference type="GO" id="GO:0009060">
    <property type="term" value="P:aerobic respiration"/>
    <property type="evidence" value="ECO:0007669"/>
    <property type="project" value="TreeGrafter"/>
</dbReference>
<dbReference type="HAMAP" id="MF_01350">
    <property type="entry name" value="NDH1_NuoH"/>
    <property type="match status" value="1"/>
</dbReference>
<dbReference type="InterPro" id="IPR001694">
    <property type="entry name" value="NADH_UbQ_OxRdtase_su1/FPO"/>
</dbReference>
<dbReference type="InterPro" id="IPR018086">
    <property type="entry name" value="NADH_UbQ_OxRdtase_su1_CS"/>
</dbReference>
<dbReference type="NCBIfam" id="NF004741">
    <property type="entry name" value="PRK06076.1-2"/>
    <property type="match status" value="1"/>
</dbReference>
<dbReference type="NCBIfam" id="NF004742">
    <property type="entry name" value="PRK06076.1-3"/>
    <property type="match status" value="1"/>
</dbReference>
<dbReference type="PANTHER" id="PTHR11432">
    <property type="entry name" value="NADH DEHYDROGENASE SUBUNIT 1"/>
    <property type="match status" value="1"/>
</dbReference>
<dbReference type="PANTHER" id="PTHR11432:SF3">
    <property type="entry name" value="NADH-UBIQUINONE OXIDOREDUCTASE CHAIN 1"/>
    <property type="match status" value="1"/>
</dbReference>
<dbReference type="Pfam" id="PF00146">
    <property type="entry name" value="NADHdh"/>
    <property type="match status" value="1"/>
</dbReference>
<dbReference type="PROSITE" id="PS00668">
    <property type="entry name" value="COMPLEX1_ND1_2"/>
    <property type="match status" value="1"/>
</dbReference>
<feature type="chain" id="PRO_0000240120" description="NADH-quinone oxidoreductase subunit H">
    <location>
        <begin position="1"/>
        <end position="363"/>
    </location>
</feature>
<feature type="transmembrane region" description="Helical" evidence="1">
    <location>
        <begin position="29"/>
        <end position="49"/>
    </location>
</feature>
<feature type="transmembrane region" description="Helical" evidence="1">
    <location>
        <begin position="62"/>
        <end position="82"/>
    </location>
</feature>
<feature type="transmembrane region" description="Helical" evidence="1">
    <location>
        <begin position="96"/>
        <end position="116"/>
    </location>
</feature>
<feature type="transmembrane region" description="Helical" evidence="1">
    <location>
        <begin position="127"/>
        <end position="147"/>
    </location>
</feature>
<feature type="transmembrane region" description="Helical" evidence="1">
    <location>
        <begin position="163"/>
        <end position="183"/>
    </location>
</feature>
<feature type="transmembrane region" description="Helical" evidence="1">
    <location>
        <begin position="202"/>
        <end position="222"/>
    </location>
</feature>
<feature type="transmembrane region" description="Helical" evidence="1">
    <location>
        <begin position="239"/>
        <end position="257"/>
    </location>
</feature>
<feature type="transmembrane region" description="Helical" evidence="1">
    <location>
        <begin position="264"/>
        <end position="286"/>
    </location>
</feature>
<feature type="transmembrane region" description="Helical" evidence="1">
    <location>
        <begin position="299"/>
        <end position="319"/>
    </location>
</feature>
<feature type="transmembrane region" description="Helical" evidence="1">
    <location>
        <begin position="339"/>
        <end position="359"/>
    </location>
</feature>
<name>NUOH_XANC8</name>
<evidence type="ECO:0000255" key="1">
    <source>
        <dbReference type="HAMAP-Rule" id="MF_01350"/>
    </source>
</evidence>
<evidence type="ECO:0000305" key="2"/>
<sequence>MNELLLNVVDPLHQWFLGLGDGGVLLWTVLKILLIAVPVIVTVAFYVVWERKLIGWMHVRHGPMYVGMGIFQAFADVFKLLFKEILQPSSSHKAMFIIAPLLTLAPAFAAWSVVPFDAKLVLSNANVGLLYLLAMTSLGVYGIILAGWASNSKYAFLGAMRSAAQVVSYEIAMGFALVGVMIASGSVNLSQIVFAQAGSSGFFDWFLIPLFPLFIVYWVSGVAETNRAPFDVVEGESEIVAGHMVEYSGGAFALFFLAEYANMILVSFLISIFFLGGWLSPIQGWVTADISPWVNWLWTGGWPWLLMKVFFFASAYIWFRASFPRYRYDQIMRLGWKVFIPLTIVWIAVTALMVFYGVIQKGV</sequence>
<gene>
    <name evidence="1" type="primary">nuoH</name>
    <name type="ordered locus">XC_1596</name>
</gene>
<protein>
    <recommendedName>
        <fullName evidence="1">NADH-quinone oxidoreductase subunit H</fullName>
        <ecNumber evidence="1">7.1.1.-</ecNumber>
    </recommendedName>
    <alternativeName>
        <fullName evidence="1">NADH dehydrogenase I subunit H</fullName>
    </alternativeName>
    <alternativeName>
        <fullName evidence="1">NDH-1 subunit H</fullName>
    </alternativeName>
</protein>
<keyword id="KW-0997">Cell inner membrane</keyword>
<keyword id="KW-1003">Cell membrane</keyword>
<keyword id="KW-0472">Membrane</keyword>
<keyword id="KW-0520">NAD</keyword>
<keyword id="KW-0874">Quinone</keyword>
<keyword id="KW-1278">Translocase</keyword>
<keyword id="KW-0812">Transmembrane</keyword>
<keyword id="KW-1133">Transmembrane helix</keyword>
<keyword id="KW-0830">Ubiquinone</keyword>
<comment type="function">
    <text evidence="1">NDH-1 shuttles electrons from NADH, via FMN and iron-sulfur (Fe-S) centers, to quinones in the respiratory chain. The immediate electron acceptor for the enzyme in this species is believed to be ubiquinone. Couples the redox reaction to proton translocation (for every two electrons transferred, four hydrogen ions are translocated across the cytoplasmic membrane), and thus conserves the redox energy in a proton gradient. This subunit may bind ubiquinone.</text>
</comment>
<comment type="catalytic activity">
    <reaction evidence="1">
        <text>a quinone + NADH + 5 H(+)(in) = a quinol + NAD(+) + 4 H(+)(out)</text>
        <dbReference type="Rhea" id="RHEA:57888"/>
        <dbReference type="ChEBI" id="CHEBI:15378"/>
        <dbReference type="ChEBI" id="CHEBI:24646"/>
        <dbReference type="ChEBI" id="CHEBI:57540"/>
        <dbReference type="ChEBI" id="CHEBI:57945"/>
        <dbReference type="ChEBI" id="CHEBI:132124"/>
    </reaction>
</comment>
<comment type="subunit">
    <text evidence="1">NDH-1 is composed of 14 different subunits. Subunits NuoA, H, J, K, L, M, N constitute the membrane sector of the complex.</text>
</comment>
<comment type="subcellular location">
    <subcellularLocation>
        <location evidence="1">Cell inner membrane</location>
        <topology evidence="1">Multi-pass membrane protein</topology>
    </subcellularLocation>
</comment>
<comment type="similarity">
    <text evidence="1">Belongs to the complex I subunit 1 family.</text>
</comment>
<comment type="sequence caution" evidence="2">
    <conflict type="erroneous initiation">
        <sequence resource="EMBL-CDS" id="AAY48662"/>
    </conflict>
</comment>
<organism>
    <name type="scientific">Xanthomonas campestris pv. campestris (strain 8004)</name>
    <dbReference type="NCBI Taxonomy" id="314565"/>
    <lineage>
        <taxon>Bacteria</taxon>
        <taxon>Pseudomonadati</taxon>
        <taxon>Pseudomonadota</taxon>
        <taxon>Gammaproteobacteria</taxon>
        <taxon>Lysobacterales</taxon>
        <taxon>Lysobacteraceae</taxon>
        <taxon>Xanthomonas</taxon>
    </lineage>
</organism>
<accession>Q4UWB1</accession>
<proteinExistence type="inferred from homology"/>
<reference key="1">
    <citation type="journal article" date="2005" name="Genome Res.">
        <title>Comparative and functional genomic analyses of the pathogenicity of phytopathogen Xanthomonas campestris pv. campestris.</title>
        <authorList>
            <person name="Qian W."/>
            <person name="Jia Y."/>
            <person name="Ren S.-X."/>
            <person name="He Y.-Q."/>
            <person name="Feng J.-X."/>
            <person name="Lu L.-F."/>
            <person name="Sun Q."/>
            <person name="Ying G."/>
            <person name="Tang D.-J."/>
            <person name="Tang H."/>
            <person name="Wu W."/>
            <person name="Hao P."/>
            <person name="Wang L."/>
            <person name="Jiang B.-L."/>
            <person name="Zeng S."/>
            <person name="Gu W.-Y."/>
            <person name="Lu G."/>
            <person name="Rong L."/>
            <person name="Tian Y."/>
            <person name="Yao Z."/>
            <person name="Fu G."/>
            <person name="Chen B."/>
            <person name="Fang R."/>
            <person name="Qiang B."/>
            <person name="Chen Z."/>
            <person name="Zhao G.-P."/>
            <person name="Tang J.-L."/>
            <person name="He C."/>
        </authorList>
    </citation>
    <scope>NUCLEOTIDE SEQUENCE [LARGE SCALE GENOMIC DNA]</scope>
    <source>
        <strain>8004</strain>
    </source>
</reference>